<gene>
    <name type="ordered locus">MmarC6_1201</name>
</gene>
<organism>
    <name type="scientific">Methanococcus maripaludis (strain C6 / ATCC BAA-1332)</name>
    <dbReference type="NCBI Taxonomy" id="444158"/>
    <lineage>
        <taxon>Archaea</taxon>
        <taxon>Methanobacteriati</taxon>
        <taxon>Methanobacteriota</taxon>
        <taxon>Methanomada group</taxon>
        <taxon>Methanococci</taxon>
        <taxon>Methanococcales</taxon>
        <taxon>Methanococcaceae</taxon>
        <taxon>Methanococcus</taxon>
    </lineage>
</organism>
<name>RFRNP_METM6</name>
<reference key="1">
    <citation type="submission" date="2007-10" db="EMBL/GenBank/DDBJ databases">
        <title>Complete sequence of Methanococcus maripaludis C6.</title>
        <authorList>
            <consortium name="US DOE Joint Genome Institute"/>
            <person name="Copeland A."/>
            <person name="Lucas S."/>
            <person name="Lapidus A."/>
            <person name="Barry K."/>
            <person name="Glavina del Rio T."/>
            <person name="Dalin E."/>
            <person name="Tice H."/>
            <person name="Pitluck S."/>
            <person name="Clum A."/>
            <person name="Schmutz J."/>
            <person name="Larimer F."/>
            <person name="Land M."/>
            <person name="Hauser L."/>
            <person name="Kyrpides N."/>
            <person name="Mikhailova N."/>
            <person name="Sieprawska-Lupa M."/>
            <person name="Whitman W.B."/>
            <person name="Richardson P."/>
        </authorList>
    </citation>
    <scope>NUCLEOTIDE SEQUENCE [LARGE SCALE GENOMIC DNA]</scope>
    <source>
        <strain>C6 / ATCC BAA-1332</strain>
    </source>
</reference>
<feature type="chain" id="PRO_0000366694" description="RNA-free ribonuclease P">
    <location>
        <begin position="1"/>
        <end position="223"/>
    </location>
</feature>
<proteinExistence type="inferred from homology"/>
<dbReference type="EC" id="3.1.26.5" evidence="1"/>
<dbReference type="EMBL" id="CP000867">
    <property type="protein sequence ID" value="ABX02014.1"/>
    <property type="molecule type" value="Genomic_DNA"/>
</dbReference>
<dbReference type="SMR" id="A9A9J1"/>
<dbReference type="STRING" id="444158.MmarC6_1201"/>
<dbReference type="KEGG" id="mmx:MmarC6_1201"/>
<dbReference type="eggNOG" id="arCOG00720">
    <property type="taxonomic scope" value="Archaea"/>
</dbReference>
<dbReference type="HOGENOM" id="CLU_109672_0_0_2"/>
<dbReference type="OrthoDB" id="95197at2157"/>
<dbReference type="PhylomeDB" id="A9A9J1"/>
<dbReference type="GO" id="GO:0004526">
    <property type="term" value="F:ribonuclease P activity"/>
    <property type="evidence" value="ECO:0007669"/>
    <property type="project" value="UniProtKB-UniRule"/>
</dbReference>
<dbReference type="GO" id="GO:0001682">
    <property type="term" value="P:tRNA 5'-leader removal"/>
    <property type="evidence" value="ECO:0007669"/>
    <property type="project" value="UniProtKB-UniRule"/>
</dbReference>
<dbReference type="CDD" id="cd18691">
    <property type="entry name" value="PIN_VapC-like"/>
    <property type="match status" value="1"/>
</dbReference>
<dbReference type="HAMAP" id="MF_01078">
    <property type="entry name" value="RNA_free_RNase_P"/>
    <property type="match status" value="1"/>
</dbReference>
<dbReference type="InterPro" id="IPR014856">
    <property type="entry name" value="RNA_free_RNase_P"/>
</dbReference>
<dbReference type="NCBIfam" id="NF003340">
    <property type="entry name" value="PRK04358.1-1"/>
    <property type="match status" value="1"/>
</dbReference>
<dbReference type="NCBIfam" id="NF003343">
    <property type="entry name" value="PRK04358.1-4"/>
    <property type="match status" value="1"/>
</dbReference>
<dbReference type="NCBIfam" id="TIGR03875">
    <property type="entry name" value="RNA_lig_partner"/>
    <property type="match status" value="1"/>
</dbReference>
<dbReference type="PANTHER" id="PTHR41173:SF1">
    <property type="entry name" value="RNA-FREE RIBONUCLEASE P"/>
    <property type="match status" value="1"/>
</dbReference>
<dbReference type="PANTHER" id="PTHR41173">
    <property type="entry name" value="UPF0278 PROTEIN TK1425"/>
    <property type="match status" value="1"/>
</dbReference>
<dbReference type="Pfam" id="PF08745">
    <property type="entry name" value="PIN_5"/>
    <property type="match status" value="1"/>
</dbReference>
<keyword id="KW-0255">Endonuclease</keyword>
<keyword id="KW-0378">Hydrolase</keyword>
<keyword id="KW-0540">Nuclease</keyword>
<keyword id="KW-0819">tRNA processing</keyword>
<evidence type="ECO:0000255" key="1">
    <source>
        <dbReference type="HAMAP-Rule" id="MF_01078"/>
    </source>
</evidence>
<protein>
    <recommendedName>
        <fullName evidence="1">RNA-free ribonuclease P</fullName>
        <shortName evidence="1">RNA-free RNase P</shortName>
        <ecNumber evidence="1">3.1.26.5</ecNumber>
    </recommendedName>
    <alternativeName>
        <fullName evidence="1">Protein-only RNase P</fullName>
    </alternativeName>
</protein>
<comment type="function">
    <text evidence="1">RNA-free RNase P that catalyzes the removal of the 5'-leader sequence from pre-tRNA to produce the mature 5'-terminus.</text>
</comment>
<comment type="catalytic activity">
    <reaction evidence="1">
        <text>Endonucleolytic cleavage of RNA, removing 5'-extranucleotides from tRNA precursor.</text>
        <dbReference type="EC" id="3.1.26.5"/>
    </reaction>
</comment>
<comment type="similarity">
    <text evidence="1">Belongs to the HARP family.</text>
</comment>
<accession>A9A9J1</accession>
<sequence length="223" mass="25749">MQKQRFCLDTTAITDSDVRKSLGVSNISESAEKIMDIVAQARVQLDISCHIPYNTVYKELIGFLIREECAPETLIKVDTWLVKKTPNRYEIKIPAEIFHEYIKDLRERINKGMRISENAMYETALEAYILSKPDEKDKEDVLNEVLSKTVNSFRDKYRNTLRGGTLDSAPDLDVLLLAKELDAAVVANDEGIEKWAQRLGLRFVNARDFPFILQEYLDLWDKK</sequence>